<organism>
    <name type="scientific">Oryza sativa subsp. japonica</name>
    <name type="common">Rice</name>
    <dbReference type="NCBI Taxonomy" id="39947"/>
    <lineage>
        <taxon>Eukaryota</taxon>
        <taxon>Viridiplantae</taxon>
        <taxon>Streptophyta</taxon>
        <taxon>Embryophyta</taxon>
        <taxon>Tracheophyta</taxon>
        <taxon>Spermatophyta</taxon>
        <taxon>Magnoliopsida</taxon>
        <taxon>Liliopsida</taxon>
        <taxon>Poales</taxon>
        <taxon>Poaceae</taxon>
        <taxon>BOP clade</taxon>
        <taxon>Oryzoideae</taxon>
        <taxon>Oryzeae</taxon>
        <taxon>Oryzinae</taxon>
        <taxon>Oryza</taxon>
        <taxon>Oryza sativa</taxon>
    </lineage>
</organism>
<sequence length="209" mass="22215">MVGLVGGGGWRVGDDAAGGGGGGAVAAGAAAAAEAEHMRRLHSHAPGEHQCSSALVKHIKAPVHLVWSLVRSFDQPQRYKPFVSRCVVRGGDLEIGSVREVNVKTGLPATTSTERLELLDDDEHILSVKFVGGDHRLRNYSSIVTVHPESIDGRPGTLVIESFVVDVPDGNTKDETCYFVEAVIKCNLTSLAEVSERLAVQSPTSPLEQ</sequence>
<proteinExistence type="evidence at protein level"/>
<reference key="1">
    <citation type="journal article" date="2012" name="J. Exp. Bot.">
        <title>A rice orthologue of the ABA receptor, OsPYL/RCAR5, is a positive regulator of the ABA signal transduction pathway in seed germination and early seedling growth.</title>
        <authorList>
            <person name="Kim H."/>
            <person name="Hwang H."/>
            <person name="Hong J.W."/>
            <person name="Lee Y.N."/>
            <person name="Ahn I.P."/>
            <person name="Yoon I.S."/>
            <person name="Yoo S.D."/>
            <person name="Lee S."/>
            <person name="Lee S.C."/>
            <person name="Kim B.G."/>
        </authorList>
    </citation>
    <scope>NUCLEOTIDE SEQUENCE [MRNA]</scope>
    <scope>FUNCTION</scope>
    <scope>INTERACTION WITH PP2C30</scope>
    <scope>SUBCELLULAR LOCATION</scope>
    <source>
        <strain>cv. Dongjin</strain>
    </source>
</reference>
<reference key="2">
    <citation type="journal article" date="2005" name="Mol. Genet. Genomics">
        <title>A fine physical map of the rice chromosome 5.</title>
        <authorList>
            <person name="Cheng C.-H."/>
            <person name="Chung M.C."/>
            <person name="Liu S.-M."/>
            <person name="Chen S.-K."/>
            <person name="Kao F.Y."/>
            <person name="Lin S.-J."/>
            <person name="Hsiao S.-H."/>
            <person name="Tseng I.C."/>
            <person name="Hsing Y.-I.C."/>
            <person name="Wu H.-P."/>
            <person name="Chen C.-S."/>
            <person name="Shaw J.-F."/>
            <person name="Wu J."/>
            <person name="Matsumoto T."/>
            <person name="Sasaki T."/>
            <person name="Chen H.-C."/>
            <person name="Chow T.-Y."/>
        </authorList>
    </citation>
    <scope>NUCLEOTIDE SEQUENCE [LARGE SCALE GENOMIC DNA]</scope>
    <source>
        <strain>cv. Nipponbare</strain>
    </source>
</reference>
<reference key="3">
    <citation type="journal article" date="2005" name="Nature">
        <title>The map-based sequence of the rice genome.</title>
        <authorList>
            <consortium name="International rice genome sequencing project (IRGSP)"/>
        </authorList>
    </citation>
    <scope>NUCLEOTIDE SEQUENCE [LARGE SCALE GENOMIC DNA]</scope>
    <source>
        <strain>cv. Nipponbare</strain>
    </source>
</reference>
<reference key="4">
    <citation type="journal article" date="2008" name="Nucleic Acids Res.">
        <title>The rice annotation project database (RAP-DB): 2008 update.</title>
        <authorList>
            <consortium name="The rice annotation project (RAP)"/>
        </authorList>
    </citation>
    <scope>GENOME REANNOTATION</scope>
    <source>
        <strain>cv. Nipponbare</strain>
    </source>
</reference>
<reference key="5">
    <citation type="journal article" date="2013" name="Rice">
        <title>Improvement of the Oryza sativa Nipponbare reference genome using next generation sequence and optical map data.</title>
        <authorList>
            <person name="Kawahara Y."/>
            <person name="de la Bastide M."/>
            <person name="Hamilton J.P."/>
            <person name="Kanamori H."/>
            <person name="McCombie W.R."/>
            <person name="Ouyang S."/>
            <person name="Schwartz D.C."/>
            <person name="Tanaka T."/>
            <person name="Wu J."/>
            <person name="Zhou S."/>
            <person name="Childs K.L."/>
            <person name="Davidson R.M."/>
            <person name="Lin H."/>
            <person name="Quesada-Ocampo L."/>
            <person name="Vaillancourt B."/>
            <person name="Sakai H."/>
            <person name="Lee S.S."/>
            <person name="Kim J."/>
            <person name="Numa H."/>
            <person name="Itoh T."/>
            <person name="Buell C.R."/>
            <person name="Matsumoto T."/>
        </authorList>
    </citation>
    <scope>GENOME REANNOTATION</scope>
    <source>
        <strain>cv. Nipponbare</strain>
    </source>
</reference>
<reference key="6">
    <citation type="journal article" date="2003" name="Science">
        <title>Collection, mapping, and annotation of over 28,000 cDNA clones from japonica rice.</title>
        <authorList>
            <consortium name="The rice full-length cDNA consortium"/>
        </authorList>
    </citation>
    <scope>NUCLEOTIDE SEQUENCE [LARGE SCALE MRNA]</scope>
    <source>
        <strain>cv. Nipponbare</strain>
    </source>
</reference>
<reference key="7">
    <citation type="journal article" date="2014" name="J. Exp. Bot.">
        <title>Overexpression of PYL5 in rice enhances drought tolerance, inhibits growth, and modulates gene expression.</title>
        <authorList>
            <person name="Kim H."/>
            <person name="Lee K."/>
            <person name="Hwang H."/>
            <person name="Bhatnagar N."/>
            <person name="Kim D.Y."/>
            <person name="Yoon I.S."/>
            <person name="Byun M.O."/>
            <person name="Kim S.T."/>
            <person name="Jung K.H."/>
            <person name="Kim B.G."/>
        </authorList>
    </citation>
    <scope>FUNCTION</scope>
    <scope>TISSUE SPECIFICITY</scope>
    <scope>INDUCTION</scope>
</reference>
<reference key="8">
    <citation type="journal article" date="2014" name="PLoS ONE">
        <title>Identification and characterization of ABA receptors in Oryza sativa.</title>
        <authorList>
            <person name="He Y."/>
            <person name="Hao Q."/>
            <person name="Li W."/>
            <person name="Yan C."/>
            <person name="Yan N."/>
            <person name="Yin P."/>
        </authorList>
    </citation>
    <scope>FUNCTION</scope>
    <scope>SUBUNIT</scope>
</reference>
<reference key="9">
    <citation type="journal article" date="2015" name="Rice">
        <title>Characterization and functional analysis of pyrabactin resistance-like abscisic acid receptor family in rice.</title>
        <authorList>
            <person name="Tian X."/>
            <person name="Wang Z."/>
            <person name="Li X."/>
            <person name="Lv T."/>
            <person name="Liu H."/>
            <person name="Wang L."/>
            <person name="Niu H."/>
            <person name="Bu Q."/>
        </authorList>
    </citation>
    <scope>INTERACTION WITH PP2C30 AND PP2C53</scope>
    <scope>SUBCELLULAR LOCATION</scope>
</reference>
<reference key="10">
    <citation type="journal article" date="2017" name="Mol. Plant">
        <title>Modulation of ABA signaling by altering VxGL motif of PP2Cs in Oryza sativa.</title>
        <authorList>
            <person name="Han S."/>
            <person name="Min M.K."/>
            <person name="Lee S.Y."/>
            <person name="Lim C.W."/>
            <person name="Bhatnagar N."/>
            <person name="Lee Y."/>
            <person name="Shin D."/>
            <person name="Chung K.Y."/>
            <person name="Lee S.C."/>
            <person name="Kim B.G."/>
            <person name="Lee S."/>
        </authorList>
    </citation>
    <scope>INTERACTION WITH PP2C50</scope>
</reference>
<reference key="11">
    <citation type="journal article" date="2017" name="Plant Mol. Biol.">
        <title>The protein phosphatase 2C clade A protein OsPP2C51 positively regulates seed germination by directly inactivating OsbZIP10.</title>
        <authorList>
            <person name="Bhatnagar N."/>
            <person name="Min M.K."/>
            <person name="Choi E.H."/>
            <person name="Kim N."/>
            <person name="Moon S.J."/>
            <person name="Yoon I."/>
            <person name="Kwon T."/>
            <person name="Jung K.H."/>
            <person name="Kim B.G."/>
        </authorList>
    </citation>
    <scope>INTERACTION WITH PP2C51</scope>
    <scope>SUBCELLULAR LOCATION</scope>
</reference>
<name>PYL5_ORYSJ</name>
<evidence type="ECO:0000250" key="1">
    <source>
        <dbReference type="UniProtKB" id="O49686"/>
    </source>
</evidence>
<evidence type="ECO:0000250" key="2">
    <source>
        <dbReference type="UniProtKB" id="Q84MC7"/>
    </source>
</evidence>
<evidence type="ECO:0000250" key="3">
    <source>
        <dbReference type="UniProtKB" id="Q8H1R0"/>
    </source>
</evidence>
<evidence type="ECO:0000250" key="4">
    <source>
        <dbReference type="UniProtKB" id="Q8VZS8"/>
    </source>
</evidence>
<evidence type="ECO:0000269" key="5">
    <source>
    </source>
</evidence>
<evidence type="ECO:0000269" key="6">
    <source>
    </source>
</evidence>
<evidence type="ECO:0000269" key="7">
    <source>
    </source>
</evidence>
<evidence type="ECO:0000269" key="8">
    <source>
    </source>
</evidence>
<evidence type="ECO:0000269" key="9">
    <source>
    </source>
</evidence>
<evidence type="ECO:0000269" key="10">
    <source>
    </source>
</evidence>
<evidence type="ECO:0000303" key="11">
    <source>
    </source>
</evidence>
<evidence type="ECO:0000303" key="12">
    <source>
    </source>
</evidence>
<evidence type="ECO:0000305" key="13"/>
<evidence type="ECO:0000312" key="14">
    <source>
        <dbReference type="EMBL" id="AAT47101.1"/>
    </source>
</evidence>
<evidence type="ECO:0000312" key="15">
    <source>
        <dbReference type="EMBL" id="BAS92815.1"/>
    </source>
</evidence>
<accession>Q6I5C3</accession>
<accession>K4NDW6</accession>
<protein>
    <recommendedName>
        <fullName evidence="13">Abscisic acid receptor PYL5</fullName>
    </recommendedName>
    <alternativeName>
        <fullName evidence="12">PYR1-like protein 11</fullName>
        <shortName evidence="12">OsPYL11</shortName>
    </alternativeName>
    <alternativeName>
        <fullName evidence="11">PYR1-like protein 5</fullName>
        <shortName evidence="11">OsPYL5</shortName>
    </alternativeName>
    <alternativeName>
        <fullName evidence="13">Regulatory components of ABA receptor 5</fullName>
    </alternativeName>
</protein>
<feature type="chain" id="PRO_0000444340" description="Abscisic acid receptor PYL5">
    <location>
        <begin position="1"/>
        <end position="209"/>
    </location>
</feature>
<feature type="region of interest" description="START-like" evidence="3">
    <location>
        <begin position="44"/>
        <end position="196"/>
    </location>
</feature>
<feature type="short sequence motif" description="Gate loop" evidence="4">
    <location>
        <begin position="105"/>
        <end position="109"/>
    </location>
</feature>
<feature type="short sequence motif" description="Latch loop" evidence="4">
    <location>
        <begin position="135"/>
        <end position="137"/>
    </location>
</feature>
<feature type="binding site" evidence="3">
    <location>
        <position position="80"/>
    </location>
    <ligand>
        <name>abscisate</name>
        <dbReference type="ChEBI" id="CHEBI:62432"/>
    </ligand>
</feature>
<feature type="binding site" evidence="1">
    <location>
        <begin position="109"/>
        <end position="114"/>
    </location>
    <ligand>
        <name>abscisate</name>
        <dbReference type="ChEBI" id="CHEBI:62432"/>
    </ligand>
</feature>
<feature type="binding site" evidence="1">
    <location>
        <begin position="136"/>
        <end position="142"/>
    </location>
    <ligand>
        <name>abscisate</name>
        <dbReference type="ChEBI" id="CHEBI:62432"/>
    </ligand>
</feature>
<feature type="binding site" evidence="1">
    <location>
        <position position="161"/>
    </location>
    <ligand>
        <name>abscisate</name>
        <dbReference type="ChEBI" id="CHEBI:62432"/>
    </ligand>
</feature>
<feature type="site" description="Involved in ABA binding" evidence="2">
    <location>
        <position position="81"/>
    </location>
</feature>
<feature type="site" description="Involved in interactions with PP2Cs" evidence="1">
    <location>
        <position position="108"/>
    </location>
</feature>
<feature type="site" description="Involved in interactions with PP2Cs" evidence="1">
    <location>
        <position position="172"/>
    </location>
</feature>
<feature type="site" description="Involved in ABA binding" evidence="2">
    <location>
        <position position="180"/>
    </location>
</feature>
<feature type="disulfide bond" description="Reversible" evidence="2">
    <location>
        <begin position="51"/>
        <end position="177"/>
    </location>
</feature>
<keyword id="KW-0002">3D-structure</keyword>
<keyword id="KW-0938">Abscisic acid signaling pathway</keyword>
<keyword id="KW-0963">Cytoplasm</keyword>
<keyword id="KW-1015">Disulfide bond</keyword>
<keyword id="KW-0539">Nucleus</keyword>
<keyword id="KW-0650">Protein phosphatase inhibitor</keyword>
<keyword id="KW-0675">Receptor</keyword>
<keyword id="KW-1185">Reference proteome</keyword>
<keyword id="KW-0346">Stress response</keyword>
<comment type="function">
    <text evidence="5 6 7">Intracellular abscisic acid (ABA) receptor that functions as a positive regulator of ABA signaling pathway (PubMed:22071266, PubMed:24474809). Together with ABI5, PP2C30 and SAPK2, is part of an ABA signaling unit that modulates seed germination and early seedling growth (PubMed:22071266). Acts as a positive regulator of abiotic stress-responsive gene expression (PubMed:24474809). Inhibits the protein phosphatases PP2C06 and PP2C09 when activated by ABA (PubMed:24743650).</text>
</comment>
<comment type="subunit">
    <text evidence="5 7 8 9 10">Monomer (PubMed:24743650). Interacts with PP2C30. Binding to PP2C30 is dependent on the presence of abscisic acid (ABA) (PubMed:22071266, PubMed:26362328). Interacts with PP2C51. Binding to PP2C51 is dependent on the presence of ABA (PubMed:28000033). Interacts with PP2C50. Binding to PP2C50 is dependent on the presence of ABA (PubMed:28827170). Interacts with PP2C53 (PubMed:26362328).</text>
</comment>
<comment type="subcellular location">
    <subcellularLocation>
        <location evidence="5 8 9">Nucleus</location>
    </subcellularLocation>
    <subcellularLocation>
        <location evidence="8">Cytoplasm</location>
        <location evidence="8">Cytosol</location>
    </subcellularLocation>
</comment>
<comment type="tissue specificity">
    <text evidence="6">Expressed in leaf sheaths and leaf blades. Expressed at low levels in roots, flowers and seeds.</text>
</comment>
<comment type="induction">
    <text evidence="6">Repressed by abscisic acid (ABA) and drought stress.</text>
</comment>
<comment type="miscellaneous">
    <text evidence="5 6">Plants overexpressing PYL5 exhibit abscisic acid (ABA) hypersensitive phenotypes (PubMed:22071266). Plants overexpressing PYL5 exhibit tolerance to salt and drought stresses, but are hypersensitive to osmotic stress and ABA during vegetative growth (PubMed:24474809).</text>
</comment>
<comment type="similarity">
    <text evidence="13">Belongs to the PYR/PYL/RCAR abscisic acid intracellular receptor family.</text>
</comment>
<gene>
    <name evidence="11" type="primary">PYL5</name>
    <name evidence="12" type="synonym">PYL11</name>
    <name evidence="11" type="synonym">RCAR5</name>
    <name evidence="15" type="ordered locus">Os05g0213500</name>
    <name evidence="13" type="ordered locus">LOC_Os05g12260</name>
    <name evidence="14" type="ORF">OSJNBb0067H15.8</name>
</gene>
<dbReference type="EMBL" id="JX970836">
    <property type="protein sequence ID" value="AFV36781.1"/>
    <property type="molecule type" value="mRNA"/>
</dbReference>
<dbReference type="EMBL" id="AC136226">
    <property type="protein sequence ID" value="AAT47101.1"/>
    <property type="molecule type" value="Genomic_DNA"/>
</dbReference>
<dbReference type="EMBL" id="AP008211">
    <property type="protein sequence ID" value="BAF16837.1"/>
    <property type="molecule type" value="Genomic_DNA"/>
</dbReference>
<dbReference type="EMBL" id="AP014961">
    <property type="protein sequence ID" value="BAS92815.1"/>
    <property type="molecule type" value="Genomic_DNA"/>
</dbReference>
<dbReference type="EMBL" id="AK065280">
    <property type="protein sequence ID" value="BAG89445.1"/>
    <property type="molecule type" value="mRNA"/>
</dbReference>
<dbReference type="RefSeq" id="XP_015640707.1">
    <property type="nucleotide sequence ID" value="XM_015785221.1"/>
</dbReference>
<dbReference type="PDB" id="6UOP">
    <property type="method" value="EM"/>
    <property type="resolution" value="1.35 A"/>
    <property type="chains" value="A=24-29"/>
</dbReference>
<dbReference type="PDB" id="6UOQ">
    <property type="method" value="EM"/>
    <property type="resolution" value="1.01 A"/>
    <property type="chains" value="A=24-29"/>
</dbReference>
<dbReference type="PDB" id="6UOR">
    <property type="method" value="EM"/>
    <property type="resolution" value="0.90 A"/>
    <property type="chains" value="A=24-29"/>
</dbReference>
<dbReference type="PDB" id="6UOS">
    <property type="method" value="EM"/>
    <property type="resolution" value="0.90 A"/>
    <property type="chains" value="A=24-29"/>
</dbReference>
<dbReference type="PDB" id="6UOU">
    <property type="method" value="EM"/>
    <property type="resolution" value="1.00 A"/>
    <property type="chains" value="A=24-29"/>
</dbReference>
<dbReference type="PDB" id="6UOW">
    <property type="method" value="EM"/>
    <property type="resolution" value="1.20 A"/>
    <property type="chains" value="A=24-29"/>
</dbReference>
<dbReference type="PDBsum" id="6UOP"/>
<dbReference type="PDBsum" id="6UOQ"/>
<dbReference type="PDBsum" id="6UOR"/>
<dbReference type="PDBsum" id="6UOS"/>
<dbReference type="PDBsum" id="6UOU"/>
<dbReference type="PDBsum" id="6UOW"/>
<dbReference type="SMR" id="Q6I5C3"/>
<dbReference type="FunCoup" id="Q6I5C3">
    <property type="interactions" value="123"/>
</dbReference>
<dbReference type="STRING" id="39947.Q6I5C3"/>
<dbReference type="PaxDb" id="39947-Q6I5C3"/>
<dbReference type="EnsemblPlants" id="Os05t0213500-01">
    <property type="protein sequence ID" value="Os05t0213500-01"/>
    <property type="gene ID" value="Os05g0213500"/>
</dbReference>
<dbReference type="Gramene" id="Os05t0213500-01">
    <property type="protein sequence ID" value="Os05t0213500-01"/>
    <property type="gene ID" value="Os05g0213500"/>
</dbReference>
<dbReference type="KEGG" id="dosa:Os05g0213500"/>
<dbReference type="eggNOG" id="ENOG502QPYH">
    <property type="taxonomic scope" value="Eukaryota"/>
</dbReference>
<dbReference type="HOGENOM" id="CLU_077517_2_0_1"/>
<dbReference type="InParanoid" id="Q6I5C3"/>
<dbReference type="OMA" id="VNDSEMY"/>
<dbReference type="OrthoDB" id="4436220at2759"/>
<dbReference type="PlantReactome" id="R-OSA-3899351">
    <property type="pathway name" value="Abscisic acid (ABA) mediated signaling"/>
</dbReference>
<dbReference type="Proteomes" id="UP000000763">
    <property type="component" value="Chromosome 5"/>
</dbReference>
<dbReference type="Proteomes" id="UP000059680">
    <property type="component" value="Chromosome 5"/>
</dbReference>
<dbReference type="GO" id="GO:0005737">
    <property type="term" value="C:cytoplasm"/>
    <property type="evidence" value="ECO:0000318"/>
    <property type="project" value="GO_Central"/>
</dbReference>
<dbReference type="GO" id="GO:0005829">
    <property type="term" value="C:cytosol"/>
    <property type="evidence" value="ECO:0000314"/>
    <property type="project" value="UniProtKB"/>
</dbReference>
<dbReference type="GO" id="GO:0005634">
    <property type="term" value="C:nucleus"/>
    <property type="evidence" value="ECO:0000314"/>
    <property type="project" value="UniProtKB"/>
</dbReference>
<dbReference type="GO" id="GO:0010427">
    <property type="term" value="F:abscisic acid binding"/>
    <property type="evidence" value="ECO:0000318"/>
    <property type="project" value="GO_Central"/>
</dbReference>
<dbReference type="GO" id="GO:0004864">
    <property type="term" value="F:protein phosphatase inhibitor activity"/>
    <property type="evidence" value="ECO:0000318"/>
    <property type="project" value="GO_Central"/>
</dbReference>
<dbReference type="GO" id="GO:0038023">
    <property type="term" value="F:signaling receptor activity"/>
    <property type="evidence" value="ECO:0000318"/>
    <property type="project" value="GO_Central"/>
</dbReference>
<dbReference type="GO" id="GO:0009738">
    <property type="term" value="P:abscisic acid-activated signaling pathway"/>
    <property type="evidence" value="ECO:0000314"/>
    <property type="project" value="UniProtKB"/>
</dbReference>
<dbReference type="GO" id="GO:0006970">
    <property type="term" value="P:response to osmotic stress"/>
    <property type="evidence" value="ECO:0000315"/>
    <property type="project" value="UniProtKB"/>
</dbReference>
<dbReference type="GO" id="GO:0009651">
    <property type="term" value="P:response to salt stress"/>
    <property type="evidence" value="ECO:0000315"/>
    <property type="project" value="UniProtKB"/>
</dbReference>
<dbReference type="GO" id="GO:0009414">
    <property type="term" value="P:response to water deprivation"/>
    <property type="evidence" value="ECO:0000315"/>
    <property type="project" value="UniProtKB"/>
</dbReference>
<dbReference type="GO" id="GO:0009845">
    <property type="term" value="P:seed germination"/>
    <property type="evidence" value="ECO:0000315"/>
    <property type="project" value="UniProtKB"/>
</dbReference>
<dbReference type="GO" id="GO:0090351">
    <property type="term" value="P:seedling development"/>
    <property type="evidence" value="ECO:0000315"/>
    <property type="project" value="UniProtKB"/>
</dbReference>
<dbReference type="CDD" id="cd07821">
    <property type="entry name" value="PYR_PYL_RCAR_like"/>
    <property type="match status" value="1"/>
</dbReference>
<dbReference type="FunFam" id="3.30.530.20:FF:000013">
    <property type="entry name" value="Abscisic acid receptor PYL9"/>
    <property type="match status" value="1"/>
</dbReference>
<dbReference type="Gene3D" id="3.30.530.20">
    <property type="match status" value="1"/>
</dbReference>
<dbReference type="InterPro" id="IPR050279">
    <property type="entry name" value="Plant_def-hormone_signal"/>
</dbReference>
<dbReference type="InterPro" id="IPR019587">
    <property type="entry name" value="Polyketide_cyclase/dehydratase"/>
</dbReference>
<dbReference type="InterPro" id="IPR023393">
    <property type="entry name" value="START-like_dom_sf"/>
</dbReference>
<dbReference type="PANTHER" id="PTHR31213:SF4">
    <property type="entry name" value="ABSCISIC ACID RECEPTOR PYL8"/>
    <property type="match status" value="1"/>
</dbReference>
<dbReference type="PANTHER" id="PTHR31213">
    <property type="entry name" value="OS08G0374000 PROTEIN-RELATED"/>
    <property type="match status" value="1"/>
</dbReference>
<dbReference type="Pfam" id="PF10604">
    <property type="entry name" value="Polyketide_cyc2"/>
    <property type="match status" value="1"/>
</dbReference>
<dbReference type="SUPFAM" id="SSF55961">
    <property type="entry name" value="Bet v1-like"/>
    <property type="match status" value="1"/>
</dbReference>